<sequence>MQVLSSLRSAKNRHPDCKIVRRRGRVYVICKSNPRFKAVQGGTHKKR</sequence>
<proteinExistence type="inferred from homology"/>
<keyword id="KW-0687">Ribonucleoprotein</keyword>
<keyword id="KW-0689">Ribosomal protein</keyword>
<gene>
    <name evidence="1" type="primary">rpmJ1</name>
    <name type="ordered locus">YE3108</name>
</gene>
<evidence type="ECO:0000255" key="1">
    <source>
        <dbReference type="HAMAP-Rule" id="MF_00251"/>
    </source>
</evidence>
<evidence type="ECO:0000305" key="2"/>
<comment type="similarity">
    <text evidence="1">Belongs to the bacterial ribosomal protein bL36 family.</text>
</comment>
<name>RL361_YERE8</name>
<accession>A1JNH6</accession>
<dbReference type="EMBL" id="AM286415">
    <property type="protein sequence ID" value="CAL13144.1"/>
    <property type="molecule type" value="Genomic_DNA"/>
</dbReference>
<dbReference type="RefSeq" id="YP_001007291.1">
    <property type="nucleotide sequence ID" value="NC_008800.1"/>
</dbReference>
<dbReference type="SMR" id="A1JNH6"/>
<dbReference type="KEGG" id="yen:YE3108"/>
<dbReference type="PATRIC" id="fig|393305.7.peg.3308"/>
<dbReference type="eggNOG" id="COG0257">
    <property type="taxonomic scope" value="Bacteria"/>
</dbReference>
<dbReference type="HOGENOM" id="CLU_135723_3_2_6"/>
<dbReference type="OrthoDB" id="9801558at2"/>
<dbReference type="Proteomes" id="UP000000642">
    <property type="component" value="Chromosome"/>
</dbReference>
<dbReference type="GO" id="GO:1990904">
    <property type="term" value="C:ribonucleoprotein complex"/>
    <property type="evidence" value="ECO:0007669"/>
    <property type="project" value="UniProtKB-KW"/>
</dbReference>
<dbReference type="GO" id="GO:0005840">
    <property type="term" value="C:ribosome"/>
    <property type="evidence" value="ECO:0007669"/>
    <property type="project" value="UniProtKB-KW"/>
</dbReference>
<dbReference type="GO" id="GO:0003735">
    <property type="term" value="F:structural constituent of ribosome"/>
    <property type="evidence" value="ECO:0007669"/>
    <property type="project" value="InterPro"/>
</dbReference>
<dbReference type="GO" id="GO:0006412">
    <property type="term" value="P:translation"/>
    <property type="evidence" value="ECO:0007669"/>
    <property type="project" value="UniProtKB-UniRule"/>
</dbReference>
<dbReference type="HAMAP" id="MF_00251">
    <property type="entry name" value="Ribosomal_bL36"/>
    <property type="match status" value="1"/>
</dbReference>
<dbReference type="InterPro" id="IPR000473">
    <property type="entry name" value="Ribosomal_bL36"/>
</dbReference>
<dbReference type="InterPro" id="IPR035977">
    <property type="entry name" value="Ribosomal_bL36_sp"/>
</dbReference>
<dbReference type="InterPro" id="IPR047621">
    <property type="entry name" value="Ribosomal_L36_bact"/>
</dbReference>
<dbReference type="NCBIfam" id="NF002021">
    <property type="entry name" value="PRK00831.1"/>
    <property type="match status" value="1"/>
</dbReference>
<dbReference type="NCBIfam" id="TIGR01022">
    <property type="entry name" value="rpmJ_bact"/>
    <property type="match status" value="1"/>
</dbReference>
<dbReference type="PANTHER" id="PTHR47781">
    <property type="entry name" value="50S RIBOSOMAL PROTEIN L36 2"/>
    <property type="match status" value="1"/>
</dbReference>
<dbReference type="PANTHER" id="PTHR47781:SF1">
    <property type="entry name" value="LARGE RIBOSOMAL SUBUNIT PROTEIN BL36B"/>
    <property type="match status" value="1"/>
</dbReference>
<dbReference type="Pfam" id="PF00444">
    <property type="entry name" value="Ribosomal_L36"/>
    <property type="match status" value="1"/>
</dbReference>
<dbReference type="SUPFAM" id="SSF57840">
    <property type="entry name" value="Ribosomal protein L36"/>
    <property type="match status" value="1"/>
</dbReference>
<dbReference type="PROSITE" id="PS00828">
    <property type="entry name" value="RIBOSOMAL_L36"/>
    <property type="match status" value="1"/>
</dbReference>
<feature type="chain" id="PRO_0000344732" description="Large ribosomal subunit protein bL36A">
    <location>
        <begin position="1"/>
        <end position="47"/>
    </location>
</feature>
<reference key="1">
    <citation type="journal article" date="2006" name="PLoS Genet.">
        <title>The complete genome sequence and comparative genome analysis of the high pathogenicity Yersinia enterocolitica strain 8081.</title>
        <authorList>
            <person name="Thomson N.R."/>
            <person name="Howard S."/>
            <person name="Wren B.W."/>
            <person name="Holden M.T.G."/>
            <person name="Crossman L."/>
            <person name="Challis G.L."/>
            <person name="Churcher C."/>
            <person name="Mungall K."/>
            <person name="Brooks K."/>
            <person name="Chillingworth T."/>
            <person name="Feltwell T."/>
            <person name="Abdellah Z."/>
            <person name="Hauser H."/>
            <person name="Jagels K."/>
            <person name="Maddison M."/>
            <person name="Moule S."/>
            <person name="Sanders M."/>
            <person name="Whitehead S."/>
            <person name="Quail M.A."/>
            <person name="Dougan G."/>
            <person name="Parkhill J."/>
            <person name="Prentice M.B."/>
        </authorList>
    </citation>
    <scope>NUCLEOTIDE SEQUENCE [LARGE SCALE GENOMIC DNA]</scope>
    <source>
        <strain>NCTC 13174 / 8081</strain>
    </source>
</reference>
<protein>
    <recommendedName>
        <fullName evidence="1">Large ribosomal subunit protein bL36A</fullName>
    </recommendedName>
    <alternativeName>
        <fullName evidence="2">50S ribosomal protein L36 1</fullName>
    </alternativeName>
</protein>
<organism>
    <name type="scientific">Yersinia enterocolitica serotype O:8 / biotype 1B (strain NCTC 13174 / 8081)</name>
    <dbReference type="NCBI Taxonomy" id="393305"/>
    <lineage>
        <taxon>Bacteria</taxon>
        <taxon>Pseudomonadati</taxon>
        <taxon>Pseudomonadota</taxon>
        <taxon>Gammaproteobacteria</taxon>
        <taxon>Enterobacterales</taxon>
        <taxon>Yersiniaceae</taxon>
        <taxon>Yersinia</taxon>
    </lineage>
</organism>